<dbReference type="EMBL" id="AE014075">
    <property type="protein sequence ID" value="AAN79161.1"/>
    <property type="molecule type" value="Genomic_DNA"/>
</dbReference>
<dbReference type="RefSeq" id="WP_000460431.1">
    <property type="nucleotide sequence ID" value="NZ_CP051263.1"/>
</dbReference>
<dbReference type="SMR" id="P0AAT0"/>
<dbReference type="STRING" id="199310.c0686"/>
<dbReference type="KEGG" id="ecc:c0686"/>
<dbReference type="eggNOG" id="COG2879">
    <property type="taxonomic scope" value="Bacteria"/>
</dbReference>
<dbReference type="HOGENOM" id="CLU_171734_1_1_6"/>
<dbReference type="BioCyc" id="ECOL199310:C0686-MONOMER"/>
<dbReference type="Proteomes" id="UP000001410">
    <property type="component" value="Chromosome"/>
</dbReference>
<dbReference type="InterPro" id="IPR007423">
    <property type="entry name" value="Sel_put"/>
</dbReference>
<dbReference type="PANTHER" id="PTHR38453:SF3">
    <property type="entry name" value="CYTOPLASMIC PROTEIN"/>
    <property type="match status" value="1"/>
</dbReference>
<dbReference type="PANTHER" id="PTHR38453">
    <property type="entry name" value="CYTOPLASMIC PROTEIN-RELATED"/>
    <property type="match status" value="1"/>
</dbReference>
<dbReference type="Pfam" id="PF04328">
    <property type="entry name" value="Sel_put"/>
    <property type="match status" value="1"/>
</dbReference>
<proteinExistence type="predicted"/>
<gene>
    <name type="primary">ybdD</name>
    <name type="ordered locus">c0686</name>
</gene>
<organism>
    <name type="scientific">Escherichia coli O6:H1 (strain CFT073 / ATCC 700928 / UPEC)</name>
    <dbReference type="NCBI Taxonomy" id="199310"/>
    <lineage>
        <taxon>Bacteria</taxon>
        <taxon>Pseudomonadati</taxon>
        <taxon>Pseudomonadota</taxon>
        <taxon>Gammaproteobacteria</taxon>
        <taxon>Enterobacterales</taxon>
        <taxon>Enterobacteriaceae</taxon>
        <taxon>Escherichia</taxon>
    </lineage>
</organism>
<comment type="similarity">
    <text evidence="1">To E.coli YjiX.</text>
</comment>
<feature type="chain" id="PRO_0000168663" description="Uncharacterized protein YbdD">
    <location>
        <begin position="1"/>
        <end position="65"/>
    </location>
</feature>
<name>YBDD_ECOL6</name>
<protein>
    <recommendedName>
        <fullName>Uncharacterized protein YbdD</fullName>
    </recommendedName>
</protein>
<accession>P0AAT0</accession>
<accession>P23518</accession>
<reference key="1">
    <citation type="journal article" date="2002" name="Proc. Natl. Acad. Sci. U.S.A.">
        <title>Extensive mosaic structure revealed by the complete genome sequence of uropathogenic Escherichia coli.</title>
        <authorList>
            <person name="Welch R.A."/>
            <person name="Burland V."/>
            <person name="Plunkett G. III"/>
            <person name="Redford P."/>
            <person name="Roesch P."/>
            <person name="Rasko D."/>
            <person name="Buckles E.L."/>
            <person name="Liou S.-R."/>
            <person name="Boutin A."/>
            <person name="Hackett J."/>
            <person name="Stroud D."/>
            <person name="Mayhew G.F."/>
            <person name="Rose D.J."/>
            <person name="Zhou S."/>
            <person name="Schwartz D.C."/>
            <person name="Perna N.T."/>
            <person name="Mobley H.L.T."/>
            <person name="Donnenberg M.S."/>
            <person name="Blattner F.R."/>
        </authorList>
    </citation>
    <scope>NUCLEOTIDE SEQUENCE [LARGE SCALE GENOMIC DNA]</scope>
    <source>
        <strain>CFT073 / ATCC 700928 / UPEC</strain>
    </source>
</reference>
<keyword id="KW-1185">Reference proteome</keyword>
<evidence type="ECO:0000305" key="1"/>
<sequence>MFDSLAKAGKYLGQAAKLMIGMPDYDNYVEHMRVNHPDQTPMTYEEFFRERQDARYGGKGGARCC</sequence>